<keyword id="KW-0004">4Fe-4S</keyword>
<keyword id="KW-0150">Chloroplast</keyword>
<keyword id="KW-0408">Iron</keyword>
<keyword id="KW-0411">Iron-sulfur</keyword>
<keyword id="KW-0472">Membrane</keyword>
<keyword id="KW-0479">Metal-binding</keyword>
<keyword id="KW-0520">NAD</keyword>
<keyword id="KW-0521">NADP</keyword>
<keyword id="KW-0934">Plastid</keyword>
<keyword id="KW-0618">Plastoquinone</keyword>
<keyword id="KW-0874">Quinone</keyword>
<keyword id="KW-0677">Repeat</keyword>
<keyword id="KW-0793">Thylakoid</keyword>
<keyword id="KW-1278">Translocase</keyword>
<dbReference type="EC" id="7.1.1.-" evidence="1"/>
<dbReference type="EMBL" id="AF383807">
    <property type="protein sequence ID" value="AAN61748.1"/>
    <property type="molecule type" value="Genomic_DNA"/>
</dbReference>
<dbReference type="SMR" id="Q8HVQ6"/>
<dbReference type="GO" id="GO:0009535">
    <property type="term" value="C:chloroplast thylakoid membrane"/>
    <property type="evidence" value="ECO:0007669"/>
    <property type="project" value="UniProtKB-SubCell"/>
</dbReference>
<dbReference type="GO" id="GO:0051539">
    <property type="term" value="F:4 iron, 4 sulfur cluster binding"/>
    <property type="evidence" value="ECO:0007669"/>
    <property type="project" value="UniProtKB-KW"/>
</dbReference>
<dbReference type="GO" id="GO:0005506">
    <property type="term" value="F:iron ion binding"/>
    <property type="evidence" value="ECO:0007669"/>
    <property type="project" value="UniProtKB-UniRule"/>
</dbReference>
<dbReference type="GO" id="GO:0008137">
    <property type="term" value="F:NADH dehydrogenase (ubiquinone) activity"/>
    <property type="evidence" value="ECO:0007669"/>
    <property type="project" value="InterPro"/>
</dbReference>
<dbReference type="GO" id="GO:0048038">
    <property type="term" value="F:quinone binding"/>
    <property type="evidence" value="ECO:0007669"/>
    <property type="project" value="UniProtKB-KW"/>
</dbReference>
<dbReference type="GO" id="GO:0019684">
    <property type="term" value="P:photosynthesis, light reaction"/>
    <property type="evidence" value="ECO:0007669"/>
    <property type="project" value="UniProtKB-UniRule"/>
</dbReference>
<dbReference type="FunFam" id="3.30.70.3270:FF:000006">
    <property type="entry name" value="NAD(P)H-quinone oxidoreductase subunit I, chloroplastic"/>
    <property type="match status" value="1"/>
</dbReference>
<dbReference type="Gene3D" id="3.30.70.3270">
    <property type="match status" value="1"/>
</dbReference>
<dbReference type="HAMAP" id="MF_01351">
    <property type="entry name" value="NDH1_NuoI"/>
    <property type="match status" value="1"/>
</dbReference>
<dbReference type="InterPro" id="IPR017896">
    <property type="entry name" value="4Fe4S_Fe-S-bd"/>
</dbReference>
<dbReference type="InterPro" id="IPR017900">
    <property type="entry name" value="4Fe4S_Fe_S_CS"/>
</dbReference>
<dbReference type="InterPro" id="IPR010226">
    <property type="entry name" value="NADH_quinone_OxRdtase_chainI"/>
</dbReference>
<dbReference type="InterPro" id="IPR004497">
    <property type="entry name" value="NDHI"/>
</dbReference>
<dbReference type="NCBIfam" id="TIGR00403">
    <property type="entry name" value="ndhI"/>
    <property type="match status" value="1"/>
</dbReference>
<dbReference type="NCBIfam" id="TIGR01971">
    <property type="entry name" value="NuoI"/>
    <property type="match status" value="1"/>
</dbReference>
<dbReference type="NCBIfam" id="NF004537">
    <property type="entry name" value="PRK05888.1-3"/>
    <property type="match status" value="1"/>
</dbReference>
<dbReference type="PANTHER" id="PTHR47275">
    <property type="entry name" value="NAD(P)H-QUINONE OXIDOREDUCTASE SUBUNIT I, CHLOROPLASTIC"/>
    <property type="match status" value="1"/>
</dbReference>
<dbReference type="PANTHER" id="PTHR47275:SF1">
    <property type="entry name" value="NAD(P)H-QUINONE OXIDOREDUCTASE SUBUNIT I, CHLOROPLASTIC"/>
    <property type="match status" value="1"/>
</dbReference>
<dbReference type="Pfam" id="PF00037">
    <property type="entry name" value="Fer4"/>
    <property type="match status" value="2"/>
</dbReference>
<dbReference type="SUPFAM" id="SSF54862">
    <property type="entry name" value="4Fe-4S ferredoxins"/>
    <property type="match status" value="1"/>
</dbReference>
<dbReference type="PROSITE" id="PS00198">
    <property type="entry name" value="4FE4S_FER_1"/>
    <property type="match status" value="2"/>
</dbReference>
<dbReference type="PROSITE" id="PS51379">
    <property type="entry name" value="4FE4S_FER_2"/>
    <property type="match status" value="2"/>
</dbReference>
<name>NDHI_LAGRA</name>
<geneLocation type="chloroplast"/>
<protein>
    <recommendedName>
        <fullName evidence="1">NAD(P)H-quinone oxidoreductase subunit I, chloroplastic</fullName>
        <ecNumber evidence="1">7.1.1.-</ecNumber>
    </recommendedName>
    <alternativeName>
        <fullName evidence="1">NAD(P)H dehydrogenase subunit I</fullName>
        <shortName evidence="1">NDH subunit I</shortName>
    </alternativeName>
    <alternativeName>
        <fullName evidence="1">NADH-plastoquinone oxidoreductase subunit I</fullName>
    </alternativeName>
</protein>
<comment type="function">
    <text evidence="1">NDH shuttles electrons from NAD(P)H:plastoquinone, via FMN and iron-sulfur (Fe-S) centers, to quinones in the photosynthetic chain and possibly in a chloroplast respiratory chain. The immediate electron acceptor for the enzyme in this species is believed to be plastoquinone. Couples the redox reaction to proton translocation, and thus conserves the redox energy in a proton gradient.</text>
</comment>
<comment type="catalytic activity">
    <reaction evidence="1">
        <text>a plastoquinone + NADH + (n+1) H(+)(in) = a plastoquinol + NAD(+) + n H(+)(out)</text>
        <dbReference type="Rhea" id="RHEA:42608"/>
        <dbReference type="Rhea" id="RHEA-COMP:9561"/>
        <dbReference type="Rhea" id="RHEA-COMP:9562"/>
        <dbReference type="ChEBI" id="CHEBI:15378"/>
        <dbReference type="ChEBI" id="CHEBI:17757"/>
        <dbReference type="ChEBI" id="CHEBI:57540"/>
        <dbReference type="ChEBI" id="CHEBI:57945"/>
        <dbReference type="ChEBI" id="CHEBI:62192"/>
    </reaction>
</comment>
<comment type="catalytic activity">
    <reaction evidence="1">
        <text>a plastoquinone + NADPH + (n+1) H(+)(in) = a plastoquinol + NADP(+) + n H(+)(out)</text>
        <dbReference type="Rhea" id="RHEA:42612"/>
        <dbReference type="Rhea" id="RHEA-COMP:9561"/>
        <dbReference type="Rhea" id="RHEA-COMP:9562"/>
        <dbReference type="ChEBI" id="CHEBI:15378"/>
        <dbReference type="ChEBI" id="CHEBI:17757"/>
        <dbReference type="ChEBI" id="CHEBI:57783"/>
        <dbReference type="ChEBI" id="CHEBI:58349"/>
        <dbReference type="ChEBI" id="CHEBI:62192"/>
    </reaction>
</comment>
<comment type="cofactor">
    <cofactor evidence="1">
        <name>[4Fe-4S] cluster</name>
        <dbReference type="ChEBI" id="CHEBI:49883"/>
    </cofactor>
    <text evidence="1">Binds 2 [4Fe-4S] clusters per subunit.</text>
</comment>
<comment type="subunit">
    <text evidence="1">NDH is composed of at least 16 different subunits, 5 of which are encoded in the nucleus.</text>
</comment>
<comment type="subcellular location">
    <subcellularLocation>
        <location evidence="1">Plastid</location>
        <location evidence="1">Chloroplast thylakoid membrane</location>
        <topology evidence="1">Peripheral membrane protein</topology>
    </subcellularLocation>
</comment>
<comment type="similarity">
    <text evidence="1">Belongs to the complex I 23 kDa subunit family.</text>
</comment>
<reference key="1">
    <citation type="submission" date="2003-01" db="EMBL/GenBank/DDBJ databases">
        <title>Chloroplast DNA phylogeny of tribe Heliantheae (Asteraceae).</title>
        <authorList>
            <person name="Panero J.L."/>
            <person name="Baldwin B.G."/>
            <person name="Schilling E.E."/>
            <person name="Clevinger J.A."/>
        </authorList>
    </citation>
    <scope>NUCLEOTIDE SEQUENCE [GENOMIC DNA]</scope>
</reference>
<feature type="chain" id="PRO_0000250807" description="NAD(P)H-quinone oxidoreductase subunit I, chloroplastic">
    <location>
        <begin position="1"/>
        <end position="166"/>
    </location>
</feature>
<feature type="domain" description="4Fe-4S ferredoxin-type 1" evidence="1">
    <location>
        <begin position="55"/>
        <end position="84"/>
    </location>
</feature>
<feature type="domain" description="4Fe-4S ferredoxin-type 2" evidence="1">
    <location>
        <begin position="95"/>
        <end position="124"/>
    </location>
</feature>
<feature type="binding site" evidence="1">
    <location>
        <position position="64"/>
    </location>
    <ligand>
        <name>[4Fe-4S] cluster</name>
        <dbReference type="ChEBI" id="CHEBI:49883"/>
        <label>1</label>
    </ligand>
</feature>
<feature type="binding site" evidence="1">
    <location>
        <position position="67"/>
    </location>
    <ligand>
        <name>[4Fe-4S] cluster</name>
        <dbReference type="ChEBI" id="CHEBI:49883"/>
        <label>1</label>
    </ligand>
</feature>
<feature type="binding site" evidence="1">
    <location>
        <position position="70"/>
    </location>
    <ligand>
        <name>[4Fe-4S] cluster</name>
        <dbReference type="ChEBI" id="CHEBI:49883"/>
        <label>1</label>
    </ligand>
</feature>
<feature type="binding site" evidence="1">
    <location>
        <position position="74"/>
    </location>
    <ligand>
        <name>[4Fe-4S] cluster</name>
        <dbReference type="ChEBI" id="CHEBI:49883"/>
        <label>2</label>
    </ligand>
</feature>
<feature type="binding site" evidence="1">
    <location>
        <position position="104"/>
    </location>
    <ligand>
        <name>[4Fe-4S] cluster</name>
        <dbReference type="ChEBI" id="CHEBI:49883"/>
        <label>2</label>
    </ligand>
</feature>
<feature type="binding site" evidence="1">
    <location>
        <position position="107"/>
    </location>
    <ligand>
        <name>[4Fe-4S] cluster</name>
        <dbReference type="ChEBI" id="CHEBI:49883"/>
        <label>2</label>
    </ligand>
</feature>
<feature type="binding site" evidence="1">
    <location>
        <position position="110"/>
    </location>
    <ligand>
        <name>[4Fe-4S] cluster</name>
        <dbReference type="ChEBI" id="CHEBI:49883"/>
        <label>2</label>
    </ligand>
</feature>
<feature type="binding site" evidence="1">
    <location>
        <position position="114"/>
    </location>
    <ligand>
        <name>[4Fe-4S] cluster</name>
        <dbReference type="ChEBI" id="CHEBI:49883"/>
        <label>1</label>
    </ligand>
</feature>
<accession>Q8HVQ6</accession>
<gene>
    <name evidence="1" type="primary">ndhI</name>
</gene>
<proteinExistence type="inferred from homology"/>
<organism>
    <name type="scientific">Lagophylla ramosissima</name>
    <name type="common">Branched hareleaf</name>
    <dbReference type="NCBI Taxonomy" id="149437"/>
    <lineage>
        <taxon>Eukaryota</taxon>
        <taxon>Viridiplantae</taxon>
        <taxon>Streptophyta</taxon>
        <taxon>Embryophyta</taxon>
        <taxon>Tracheophyta</taxon>
        <taxon>Spermatophyta</taxon>
        <taxon>Magnoliopsida</taxon>
        <taxon>eudicotyledons</taxon>
        <taxon>Gunneridae</taxon>
        <taxon>Pentapetalae</taxon>
        <taxon>asterids</taxon>
        <taxon>campanulids</taxon>
        <taxon>Asterales</taxon>
        <taxon>Asteraceae</taxon>
        <taxon>Asteroideae</taxon>
        <taxon>Heliantheae alliance</taxon>
        <taxon>Madieae</taxon>
        <taxon>Madiinae</taxon>
        <taxon>Lagophylla</taxon>
    </lineage>
</organism>
<sequence length="166" mass="19475">MFPMVTEFMNYGQQTVRAARYIGQGFMITLSHANRLPVTIQYPYEKLITSERFRGRIHFEFDKCIACEVCVRVCPIDLPVVDWKLETDIRKKRLLNYSIDFGICIFCGNCVEYCPTNCLSMTEEYELSTYDRHELNYNQIALGRLPMSIIDDYTIRTILNLPEIKT</sequence>
<evidence type="ECO:0000255" key="1">
    <source>
        <dbReference type="HAMAP-Rule" id="MF_01351"/>
    </source>
</evidence>